<reference key="1">
    <citation type="journal article" date="2001" name="J. Biol. Chem.">
        <title>Differentiating embryonal stem cells are a rich source of haemopoietic gene products and suggest erythroid preconditioning of primitive haemopoietic stem cells.</title>
        <authorList>
            <person name="Baird J."/>
            <person name="Ryan K."/>
            <person name="Hayes I.M."/>
            <person name="Hampson L."/>
            <person name="Clark C.M."/>
            <person name="Wootton A."/>
            <person name="Ansell J."/>
            <person name="Menzel U."/>
            <person name="Hole N."/>
            <person name="Graham G.J."/>
        </authorList>
    </citation>
    <scope>NUCLEOTIDE SEQUENCE [MRNA]</scope>
    <scope>TISSUE SPECIFICITY</scope>
</reference>
<reference key="2">
    <citation type="journal article" date="2008" name="J. Bone Miner. Res.">
        <title>Bril: a novel bone-specific modulator of mineralization.</title>
        <authorList>
            <person name="Moffatt P."/>
            <person name="Gaumond M.H."/>
            <person name="Salois P."/>
            <person name="Sellin K."/>
            <person name="Bessette M.C."/>
            <person name="Godin E."/>
            <person name="Tambasco de Oliveira P."/>
            <person name="Atkins G.J."/>
            <person name="Nanci A."/>
            <person name="Thomas G."/>
        </authorList>
    </citation>
    <scope>NUCLEOTIDE SEQUENCE [MRNA]</scope>
    <scope>FUNCTION</scope>
    <scope>SUBCELLULAR LOCATION</scope>
    <scope>TISSUE SPECIFICITY</scope>
    <scope>TOPOLOGY</scope>
    <source>
        <strain>C57BL/6J</strain>
        <tissue>Osteoblast</tissue>
    </source>
</reference>
<reference key="3">
    <citation type="submission" date="2005-07" db="EMBL/GenBank/DDBJ databases">
        <authorList>
            <person name="Mural R.J."/>
            <person name="Adams M.D."/>
            <person name="Myers E.W."/>
            <person name="Smith H.O."/>
            <person name="Venter J.C."/>
        </authorList>
    </citation>
    <scope>NUCLEOTIDE SEQUENCE [LARGE SCALE GENOMIC DNA]</scope>
</reference>
<reference key="4">
    <citation type="journal article" date="2004" name="Genome Res.">
        <title>The status, quality, and expansion of the NIH full-length cDNA project: the Mammalian Gene Collection (MGC).</title>
        <authorList>
            <consortium name="The MGC Project Team"/>
        </authorList>
    </citation>
    <scope>NUCLEOTIDE SEQUENCE [LARGE SCALE MRNA]</scope>
</reference>
<reference key="5">
    <citation type="journal article" date="2003" name="BMC Dev. Biol.">
        <title>The fragilis interferon-inducible gene family of transmembrane proteins is associated with germ cell specification in mice.</title>
        <authorList>
            <person name="Lange U.C."/>
            <person name="Saitou M."/>
            <person name="Western P.S."/>
            <person name="Barton S.C."/>
            <person name="Surani M.A."/>
        </authorList>
    </citation>
    <scope>INDUCTION</scope>
    <source>
        <strain>129</strain>
    </source>
</reference>
<reference key="6">
    <citation type="journal article" date="2011" name="J. Bone Miner. Metab.">
        <title>Characterization of the osteoblast-specific transmembrane protein IFITM5 and analysis of IFITM5-deficient mice.</title>
        <authorList>
            <person name="Hanagata N."/>
            <person name="Li X."/>
            <person name="Morita H."/>
            <person name="Takemura T."/>
            <person name="Li J."/>
            <person name="Minowa T."/>
        </authorList>
    </citation>
    <scope>FUNCTION</scope>
    <scope>DISRUPTION PHENOTYPE</scope>
    <scope>DEVELOPMENTAL STAGE</scope>
    <scope>INTERACTION WITH FKBP11</scope>
</reference>
<reference key="7">
    <citation type="journal article" date="2012" name="PLoS ONE">
        <title>The dispanins: a novel gene family of ancient origin that contains 14 human members.</title>
        <authorList>
            <person name="Sallman Almen M."/>
            <person name="Bringeland N."/>
            <person name="Fredriksson R."/>
            <person name="Schioth H.B."/>
        </authorList>
    </citation>
    <scope>GENE FAMILY</scope>
</reference>
<reference key="8">
    <citation type="journal article" date="2013" name="PLoS ONE">
        <title>Role of S-palmitoylation on IFITM5 for the interaction with FKBP11 in osteoblast cells.</title>
        <authorList>
            <person name="Tsukamoto T."/>
            <person name="Li X."/>
            <person name="Morita H."/>
            <person name="Minowa T."/>
            <person name="Aizawa T."/>
            <person name="Hanagata N."/>
            <person name="Demura M."/>
        </authorList>
    </citation>
    <scope>FUNCTION</scope>
    <scope>PALMITOYLATION AT CYS-52; CYS-53 AND CYS-86</scope>
    <scope>INTERACTION WITH FKBP11</scope>
    <scope>MUTAGENESIS OF CYS-52; CYS-53 AND CYS-86</scope>
</reference>
<reference key="9">
    <citation type="journal article" date="2014" name="J. Bone Miner. Res.">
        <title>Topological mapping of BRIL reveals a type II orientation and effects of osteogenesis imperfecta mutations on its cellular destination.</title>
        <authorList>
            <person name="Patoine A."/>
            <person name="Gaumond M.H."/>
            <person name="Jaiswal P.K."/>
            <person name="Fassier F."/>
            <person name="Rauch F."/>
            <person name="Moffatt P."/>
        </authorList>
    </citation>
    <scope>SUBCELLULAR LOCATION</scope>
    <scope>PALMITOYLATION AT CYS-52; CYS-53 AND CYS-86</scope>
    <scope>TOPOLOGY</scope>
    <scope>MUTAGENESIS OF SER-42; CYS-52; CYS-53 AND CYS-86</scope>
</reference>
<dbReference type="EMBL" id="AJ009781">
    <property type="protein sequence ID" value="CAA08829.1"/>
    <property type="molecule type" value="mRNA"/>
</dbReference>
<dbReference type="EMBL" id="EU380257">
    <property type="protein sequence ID" value="ABZ85873.1"/>
    <property type="molecule type" value="mRNA"/>
</dbReference>
<dbReference type="EMBL" id="FJ200451">
    <property type="protein sequence ID" value="ACI26732.1"/>
    <property type="molecule type" value="mRNA"/>
</dbReference>
<dbReference type="EMBL" id="CH466531">
    <property type="protein sequence ID" value="EDL17974.1"/>
    <property type="molecule type" value="Genomic_DNA"/>
</dbReference>
<dbReference type="EMBL" id="BC103790">
    <property type="protein sequence ID" value="AAI03791.1"/>
    <property type="molecule type" value="mRNA"/>
</dbReference>
<dbReference type="EMBL" id="BK001124">
    <property type="protein sequence ID" value="DAA01239.1"/>
    <property type="molecule type" value="mRNA"/>
</dbReference>
<dbReference type="CCDS" id="CCDS21993.1"/>
<dbReference type="RefSeq" id="NP_444318.1">
    <property type="nucleotide sequence ID" value="NM_053088.3"/>
</dbReference>
<dbReference type="FunCoup" id="O88728">
    <property type="interactions" value="450"/>
</dbReference>
<dbReference type="STRING" id="10090.ENSMUSP00000026562"/>
<dbReference type="TCDB" id="8.A.58.1.4">
    <property type="family name" value="the dispanin (dispanin) family"/>
</dbReference>
<dbReference type="GlyGen" id="O88728">
    <property type="glycosylation" value="1 site"/>
</dbReference>
<dbReference type="PhosphoSitePlus" id="O88728"/>
<dbReference type="SwissPalm" id="O88728"/>
<dbReference type="PaxDb" id="10090-ENSMUSP00000026562"/>
<dbReference type="ProteomicsDB" id="266953"/>
<dbReference type="Antibodypedia" id="41962">
    <property type="antibodies" value="116 antibodies from 19 providers"/>
</dbReference>
<dbReference type="Ensembl" id="ENSMUST00000026562.6">
    <property type="protein sequence ID" value="ENSMUSP00000026562.5"/>
    <property type="gene ID" value="ENSMUSG00000025489.6"/>
</dbReference>
<dbReference type="GeneID" id="73835"/>
<dbReference type="KEGG" id="mmu:73835"/>
<dbReference type="UCSC" id="uc009kiy.1">
    <property type="organism name" value="mouse"/>
</dbReference>
<dbReference type="AGR" id="MGI:1934923"/>
<dbReference type="CTD" id="387733"/>
<dbReference type="MGI" id="MGI:1934923">
    <property type="gene designation" value="Ifitm5"/>
</dbReference>
<dbReference type="VEuPathDB" id="HostDB:ENSMUSG00000025489"/>
<dbReference type="eggNOG" id="ENOG502RXZM">
    <property type="taxonomic scope" value="Eukaryota"/>
</dbReference>
<dbReference type="GeneTree" id="ENSGT00950000182857"/>
<dbReference type="HOGENOM" id="CLU_124511_2_0_1"/>
<dbReference type="InParanoid" id="O88728"/>
<dbReference type="OMA" id="SYPREDY"/>
<dbReference type="OrthoDB" id="9882660at2759"/>
<dbReference type="PhylomeDB" id="O88728"/>
<dbReference type="TreeFam" id="TF334894"/>
<dbReference type="BioGRID-ORCS" id="73835">
    <property type="hits" value="0 hits in 77 CRISPR screens"/>
</dbReference>
<dbReference type="PRO" id="PR:O88728"/>
<dbReference type="Proteomes" id="UP000000589">
    <property type="component" value="Chromosome 7"/>
</dbReference>
<dbReference type="RNAct" id="O88728">
    <property type="molecule type" value="protein"/>
</dbReference>
<dbReference type="Bgee" id="ENSMUSG00000025489">
    <property type="expression patterns" value="Expressed in vault of skull and 68 other cell types or tissues"/>
</dbReference>
<dbReference type="GO" id="GO:0005829">
    <property type="term" value="C:cytosol"/>
    <property type="evidence" value="ECO:0007669"/>
    <property type="project" value="Ensembl"/>
</dbReference>
<dbReference type="GO" id="GO:0043231">
    <property type="term" value="C:intracellular membrane-bounded organelle"/>
    <property type="evidence" value="ECO:0007669"/>
    <property type="project" value="Ensembl"/>
</dbReference>
<dbReference type="GO" id="GO:0016020">
    <property type="term" value="C:membrane"/>
    <property type="evidence" value="ECO:0000304"/>
    <property type="project" value="MGI"/>
</dbReference>
<dbReference type="GO" id="GO:0005886">
    <property type="term" value="C:plasma membrane"/>
    <property type="evidence" value="ECO:0000314"/>
    <property type="project" value="MGI"/>
</dbReference>
<dbReference type="GO" id="GO:0030282">
    <property type="term" value="P:bone mineralization"/>
    <property type="evidence" value="ECO:0000315"/>
    <property type="project" value="UniProtKB"/>
</dbReference>
<dbReference type="GO" id="GO:0060349">
    <property type="term" value="P:bone morphogenesis"/>
    <property type="evidence" value="ECO:0000315"/>
    <property type="project" value="UniProtKB"/>
</dbReference>
<dbReference type="GO" id="GO:0001701">
    <property type="term" value="P:in utero embryonic development"/>
    <property type="evidence" value="ECO:0000315"/>
    <property type="project" value="UniProtKB"/>
</dbReference>
<dbReference type="GO" id="GO:0030500">
    <property type="term" value="P:regulation of bone mineralization"/>
    <property type="evidence" value="ECO:0007669"/>
    <property type="project" value="UniProtKB-KW"/>
</dbReference>
<dbReference type="GO" id="GO:1901355">
    <property type="term" value="P:response to rapamycin"/>
    <property type="evidence" value="ECO:0000315"/>
    <property type="project" value="MGI"/>
</dbReference>
<dbReference type="GO" id="GO:1901327">
    <property type="term" value="P:response to tacrolimus"/>
    <property type="evidence" value="ECO:0000315"/>
    <property type="project" value="MGI"/>
</dbReference>
<dbReference type="GO" id="GO:0001501">
    <property type="term" value="P:skeletal system development"/>
    <property type="evidence" value="ECO:0000315"/>
    <property type="project" value="MGI"/>
</dbReference>
<dbReference type="InterPro" id="IPR007593">
    <property type="entry name" value="CD225/Dispanin_fam"/>
</dbReference>
<dbReference type="InterPro" id="IPR051517">
    <property type="entry name" value="IFITM_antiviral_protein"/>
</dbReference>
<dbReference type="PANTHER" id="PTHR13999">
    <property type="entry name" value="INTERFERON INDUCIBLE TRANSMEMBRANE PROTEIN"/>
    <property type="match status" value="1"/>
</dbReference>
<dbReference type="PANTHER" id="PTHR13999:SF10">
    <property type="entry name" value="INTERFERON-INDUCED TRANSMEMBRANE PROTEIN 5"/>
    <property type="match status" value="1"/>
</dbReference>
<dbReference type="Pfam" id="PF04505">
    <property type="entry name" value="CD225"/>
    <property type="match status" value="1"/>
</dbReference>
<accession>O88728</accession>
<name>IFM5_MOUSE</name>
<protein>
    <recommendedName>
        <fullName>Interferon-induced transmembrane protein 5</fullName>
    </recommendedName>
    <alternativeName>
        <fullName>Bone-restricted interferon-induced transmembrane protein-like protein</fullName>
        <shortName>Bril</shortName>
    </alternativeName>
    <alternativeName>
        <fullName>Dispanin subfamily A member 1</fullName>
        <shortName>DSPA1</shortName>
    </alternativeName>
    <alternativeName>
        <fullName>Fragilis family member 4</fullName>
    </alternativeName>
</protein>
<comment type="function">
    <text evidence="5 6 7 8">Required for normal bone mineralization.</text>
</comment>
<comment type="subunit">
    <text evidence="6 7">Interacts with FKBP11.</text>
</comment>
<comment type="subcellular location">
    <subcellularLocation>
        <location evidence="5 8">Cell membrane</location>
        <topology evidence="1 5">Multi-pass membrane protein</topology>
    </subcellularLocation>
</comment>
<comment type="tissue specificity">
    <text evidence="3 5">Detected in embryonic bone (at protein level) (PubMed:18442316). Highly expressed in osteoblasts of adults and embryos. Expressed in primitive hemopoietic cells.</text>
</comment>
<comment type="developmental stage">
    <text evidence="6">In embryos at 16.5 dpf, detected in lumbar and thoracic vertebra, the basisphenoid bone, the mandible, the coronal suture between the frontal and parietal bones, the maxilla, the nasal bone and the palate, as well as in the bone collars of long bones and digital bones in hind limbs, and in the primary ossification center.</text>
</comment>
<comment type="induction">
    <text evidence="4">By interferons.</text>
</comment>
<comment type="PTM">
    <text evidence="7 8">Palmitoylated.</text>
</comment>
<comment type="disruption phenotype">
    <text evidence="6">Embryonic lethality, leading to the birth of only 7% homozygous mutant pups, instead of the expected 25%. Only two out of eight pups were female. Crossing homozygous mice gave rise to about one sixth of the normal litter size, and many newborns died within 48 hours after birth. Homozygous newborns display no striking phenotype other than smaller bones and especially shorter long bones, and this phenotype persists into adulthood. The radius, ulna and tibia are frequently bent in newborns, but this is no longer the case in young adults.</text>
</comment>
<comment type="miscellaneous">
    <text>Membrane topology is controversial. The N-terminus is cytoplasmic and the C-terminus extracellular according to PubMed:24715519, while both the N-terminus and the C-terminus are extracellular according to PubMed:18442316.</text>
</comment>
<comment type="similarity">
    <text evidence="9">Belongs to the CD225/Dispanin family.</text>
</comment>
<sequence>MDTSYPREDPRAPSSRKADAAAHTALSMGTPGPTPRDHMLWSVFSTMYLNLCCLGFLALVHSVKARDQKMAGNLEAARQYGSKAKCYNILAAMWTLVPPLLLLGLVVTGALHLSKLAKDSAAFFSTKFDEEDYN</sequence>
<keyword id="KW-1003">Cell membrane</keyword>
<keyword id="KW-0217">Developmental protein</keyword>
<keyword id="KW-0449">Lipoprotein</keyword>
<keyword id="KW-0472">Membrane</keyword>
<keyword id="KW-0495">Mineral balance</keyword>
<keyword id="KW-0564">Palmitate</keyword>
<keyword id="KW-1185">Reference proteome</keyword>
<keyword id="KW-0812">Transmembrane</keyword>
<keyword id="KW-1133">Transmembrane helix</keyword>
<organism>
    <name type="scientific">Mus musculus</name>
    <name type="common">Mouse</name>
    <dbReference type="NCBI Taxonomy" id="10090"/>
    <lineage>
        <taxon>Eukaryota</taxon>
        <taxon>Metazoa</taxon>
        <taxon>Chordata</taxon>
        <taxon>Craniata</taxon>
        <taxon>Vertebrata</taxon>
        <taxon>Euteleostomi</taxon>
        <taxon>Mammalia</taxon>
        <taxon>Eutheria</taxon>
        <taxon>Euarchontoglires</taxon>
        <taxon>Glires</taxon>
        <taxon>Rodentia</taxon>
        <taxon>Myomorpha</taxon>
        <taxon>Muroidea</taxon>
        <taxon>Muridae</taxon>
        <taxon>Murinae</taxon>
        <taxon>Mus</taxon>
        <taxon>Mus</taxon>
    </lineage>
</organism>
<evidence type="ECO:0000255" key="1"/>
<evidence type="ECO:0000256" key="2">
    <source>
        <dbReference type="SAM" id="MobiDB-lite"/>
    </source>
</evidence>
<evidence type="ECO:0000269" key="3">
    <source>
    </source>
</evidence>
<evidence type="ECO:0000269" key="4">
    <source>
    </source>
</evidence>
<evidence type="ECO:0000269" key="5">
    <source>
    </source>
</evidence>
<evidence type="ECO:0000269" key="6">
    <source>
    </source>
</evidence>
<evidence type="ECO:0000269" key="7">
    <source>
    </source>
</evidence>
<evidence type="ECO:0000269" key="8">
    <source>
    </source>
</evidence>
<evidence type="ECO:0000305" key="9"/>
<evidence type="ECO:0000305" key="10">
    <source>
    </source>
</evidence>
<evidence type="ECO:0000305" key="11">
    <source>
    </source>
</evidence>
<proteinExistence type="evidence at protein level"/>
<feature type="chain" id="PRO_0000397676" description="Interferon-induced transmembrane protein 5">
    <location>
        <begin position="1"/>
        <end position="134"/>
    </location>
</feature>
<feature type="topological domain" description="Extracellular" evidence="1">
    <location>
        <begin position="1"/>
        <end position="39"/>
    </location>
</feature>
<feature type="transmembrane region" description="Helical" evidence="1">
    <location>
        <begin position="40"/>
        <end position="60"/>
    </location>
</feature>
<feature type="topological domain" description="Cytoplasmic" evidence="1">
    <location>
        <begin position="61"/>
        <end position="88"/>
    </location>
</feature>
<feature type="transmembrane region" description="Helical" evidence="1">
    <location>
        <begin position="89"/>
        <end position="109"/>
    </location>
</feature>
<feature type="topological domain" description="Extracellular" evidence="1 5 8">
    <location>
        <begin position="110"/>
        <end position="134"/>
    </location>
</feature>
<feature type="region of interest" description="Disordered" evidence="2">
    <location>
        <begin position="1"/>
        <end position="31"/>
    </location>
</feature>
<feature type="compositionally biased region" description="Basic and acidic residues" evidence="2">
    <location>
        <begin position="1"/>
        <end position="20"/>
    </location>
</feature>
<feature type="lipid moiety-binding region" description="S-palmitoyl cysteine" evidence="10 11">
    <location>
        <position position="52"/>
    </location>
</feature>
<feature type="lipid moiety-binding region" description="S-palmitoyl cysteine" evidence="10 11">
    <location>
        <position position="53"/>
    </location>
</feature>
<feature type="lipid moiety-binding region" description="S-palmitoyl cysteine" evidence="10 11">
    <location>
        <position position="86"/>
    </location>
</feature>
<feature type="mutagenesis site" description="Abolishes expression at the cell membrane." evidence="8">
    <original>S</original>
    <variation>L</variation>
    <location>
        <position position="42"/>
    </location>
</feature>
<feature type="mutagenesis site" description="Strongly reduces expression at the cell membrane. Reduces palmitoylation; when associated with A-53. Abolishes palmitoylation; when associated with A-53 and A-86." evidence="7 8">
    <original>C</original>
    <variation>A</variation>
    <location>
        <position position="52"/>
    </location>
</feature>
<feature type="mutagenesis site" description="Strongly reduces expression at the cell membrane. Reduces palmitoylation; when associated with A-52. Abolishes palmitoylation; when associated with A-52 and A-86." evidence="7 8">
    <original>C</original>
    <variation>A</variation>
    <location>
        <position position="53"/>
    </location>
</feature>
<feature type="mutagenesis site" description="No effect on location at the cell membrane. Abolishes palmitoylation; when associated with A-52 and A-53." evidence="7 8">
    <original>C</original>
    <variation>A</variation>
    <location>
        <position position="86"/>
    </location>
</feature>
<gene>
    <name type="primary">Ifitm5</name>
    <name type="synonym">Bril</name>
    <name type="synonym">Fragilis4</name>
</gene>